<sequence>MNNAPHLYFAWQQLVEKSQLMLRLATEEQWDELITSEMAYVNAVQEIAHLTEEVAPSTTMQEQLRPMLRLILDNESKVKQLLQIRMDELAKLVGQSSVQKSVLSAYGDQGGFVLAPQDNLF</sequence>
<comment type="function">
    <text evidence="1">Dual-function protein that regulates the transcription of class 2 flagellar operons and that also acts as an export chaperone for the filament-capping protein FliD. As a transcriptional regulator, acts as an anti-FlhDC factor; it directly binds FlhC, thus inhibiting the binding of the FlhC/FlhD complex to class 2 promoters, resulting in decreased expression of class 2 flagellar operons. As a chaperone, effects FliD transition to the membrane by preventing its premature polymerization, and by directing it to the export apparatus.</text>
</comment>
<comment type="subunit">
    <text evidence="1">Homodimer. Interacts with FliD and FlhC.</text>
</comment>
<comment type="subcellular location">
    <subcellularLocation>
        <location evidence="1">Cytoplasm</location>
        <location evidence="1">Cytosol</location>
    </subcellularLocation>
</comment>
<comment type="similarity">
    <text evidence="1">Belongs to the FliT family.</text>
</comment>
<reference key="1">
    <citation type="journal article" date="2009" name="PLoS Genet.">
        <title>Organised genome dynamics in the Escherichia coli species results in highly diverse adaptive paths.</title>
        <authorList>
            <person name="Touchon M."/>
            <person name="Hoede C."/>
            <person name="Tenaillon O."/>
            <person name="Barbe V."/>
            <person name="Baeriswyl S."/>
            <person name="Bidet P."/>
            <person name="Bingen E."/>
            <person name="Bonacorsi S."/>
            <person name="Bouchier C."/>
            <person name="Bouvet O."/>
            <person name="Calteau A."/>
            <person name="Chiapello H."/>
            <person name="Clermont O."/>
            <person name="Cruveiller S."/>
            <person name="Danchin A."/>
            <person name="Diard M."/>
            <person name="Dossat C."/>
            <person name="Karoui M.E."/>
            <person name="Frapy E."/>
            <person name="Garry L."/>
            <person name="Ghigo J.M."/>
            <person name="Gilles A.M."/>
            <person name="Johnson J."/>
            <person name="Le Bouguenec C."/>
            <person name="Lescat M."/>
            <person name="Mangenot S."/>
            <person name="Martinez-Jehanne V."/>
            <person name="Matic I."/>
            <person name="Nassif X."/>
            <person name="Oztas S."/>
            <person name="Petit M.A."/>
            <person name="Pichon C."/>
            <person name="Rouy Z."/>
            <person name="Ruf C.S."/>
            <person name="Schneider D."/>
            <person name="Tourret J."/>
            <person name="Vacherie B."/>
            <person name="Vallenet D."/>
            <person name="Medigue C."/>
            <person name="Rocha E.P.C."/>
            <person name="Denamur E."/>
        </authorList>
    </citation>
    <scope>NUCLEOTIDE SEQUENCE [LARGE SCALE GENOMIC DNA]</scope>
    <source>
        <strain>55989 / EAEC</strain>
    </source>
</reference>
<gene>
    <name evidence="1" type="primary">fliT</name>
    <name type="ordered locus">EC55989_2147</name>
</gene>
<protein>
    <recommendedName>
        <fullName evidence="1">Flagellar protein FliT</fullName>
    </recommendedName>
</protein>
<organism>
    <name type="scientific">Escherichia coli (strain 55989 / EAEC)</name>
    <dbReference type="NCBI Taxonomy" id="585055"/>
    <lineage>
        <taxon>Bacteria</taxon>
        <taxon>Pseudomonadati</taxon>
        <taxon>Pseudomonadota</taxon>
        <taxon>Gammaproteobacteria</taxon>
        <taxon>Enterobacterales</taxon>
        <taxon>Enterobacteriaceae</taxon>
        <taxon>Escherichia</taxon>
    </lineage>
</organism>
<dbReference type="EMBL" id="CU928145">
    <property type="protein sequence ID" value="CAU98021.1"/>
    <property type="molecule type" value="Genomic_DNA"/>
</dbReference>
<dbReference type="RefSeq" id="WP_001057844.1">
    <property type="nucleotide sequence ID" value="NC_011748.1"/>
</dbReference>
<dbReference type="SMR" id="B7L8T9"/>
<dbReference type="KEGG" id="eck:EC55989_2147"/>
<dbReference type="HOGENOM" id="CLU_155793_1_1_6"/>
<dbReference type="Proteomes" id="UP000000746">
    <property type="component" value="Chromosome"/>
</dbReference>
<dbReference type="GO" id="GO:0005829">
    <property type="term" value="C:cytosol"/>
    <property type="evidence" value="ECO:0007669"/>
    <property type="project" value="UniProtKB-SubCell"/>
</dbReference>
<dbReference type="GO" id="GO:0044781">
    <property type="term" value="P:bacterial-type flagellum organization"/>
    <property type="evidence" value="ECO:0007669"/>
    <property type="project" value="UniProtKB-KW"/>
</dbReference>
<dbReference type="GO" id="GO:1902209">
    <property type="term" value="P:negative regulation of bacterial-type flagellum assembly"/>
    <property type="evidence" value="ECO:0007669"/>
    <property type="project" value="UniProtKB-UniRule"/>
</dbReference>
<dbReference type="GO" id="GO:0006457">
    <property type="term" value="P:protein folding"/>
    <property type="evidence" value="ECO:0007669"/>
    <property type="project" value="UniProtKB-UniRule"/>
</dbReference>
<dbReference type="FunFam" id="1.20.58.380:FF:000001">
    <property type="entry name" value="Flagellar protein FliT"/>
    <property type="match status" value="1"/>
</dbReference>
<dbReference type="Gene3D" id="1.20.58.380">
    <property type="entry name" value="Flagellar protein flit"/>
    <property type="match status" value="1"/>
</dbReference>
<dbReference type="HAMAP" id="MF_01180">
    <property type="entry name" value="FliT"/>
    <property type="match status" value="1"/>
</dbReference>
<dbReference type="InterPro" id="IPR008622">
    <property type="entry name" value="FliT"/>
</dbReference>
<dbReference type="NCBIfam" id="NF007836">
    <property type="entry name" value="PRK10548.1"/>
    <property type="match status" value="1"/>
</dbReference>
<dbReference type="Pfam" id="PF05400">
    <property type="entry name" value="FliT"/>
    <property type="match status" value="1"/>
</dbReference>
<accession>B7L8T9</accession>
<keyword id="KW-1005">Bacterial flagellum biogenesis</keyword>
<keyword id="KW-0143">Chaperone</keyword>
<keyword id="KW-0963">Cytoplasm</keyword>
<keyword id="KW-1185">Reference proteome</keyword>
<keyword id="KW-0678">Repressor</keyword>
<keyword id="KW-0804">Transcription</keyword>
<keyword id="KW-0805">Transcription regulation</keyword>
<feature type="chain" id="PRO_1000164433" description="Flagellar protein FliT">
    <location>
        <begin position="1"/>
        <end position="121"/>
    </location>
</feature>
<feature type="region of interest" description="Required for homodimerization" evidence="1">
    <location>
        <begin position="1"/>
        <end position="50"/>
    </location>
</feature>
<feature type="region of interest" description="FliD binding" evidence="1">
    <location>
        <begin position="60"/>
        <end position="98"/>
    </location>
</feature>
<evidence type="ECO:0000255" key="1">
    <source>
        <dbReference type="HAMAP-Rule" id="MF_01180"/>
    </source>
</evidence>
<name>FLIT_ECO55</name>
<proteinExistence type="inferred from homology"/>